<dbReference type="EMBL" id="AP009552">
    <property type="protein sequence ID" value="BAG01985.1"/>
    <property type="molecule type" value="Genomic_DNA"/>
</dbReference>
<dbReference type="RefSeq" id="WP_012265372.1">
    <property type="nucleotide sequence ID" value="NC_010296.1"/>
</dbReference>
<dbReference type="SMR" id="B0JFY0"/>
<dbReference type="STRING" id="449447.MAE_21630"/>
<dbReference type="PaxDb" id="449447-MAE_21630"/>
<dbReference type="EnsemblBacteria" id="BAG01985">
    <property type="protein sequence ID" value="BAG01985"/>
    <property type="gene ID" value="MAE_21630"/>
</dbReference>
<dbReference type="KEGG" id="mar:MAE_21630"/>
<dbReference type="PATRIC" id="fig|449447.4.peg.1977"/>
<dbReference type="eggNOG" id="COG0249">
    <property type="taxonomic scope" value="Bacteria"/>
</dbReference>
<dbReference type="HOGENOM" id="CLU_002472_4_0_3"/>
<dbReference type="BioCyc" id="MAER449447:MAE_RS09430-MONOMER"/>
<dbReference type="Proteomes" id="UP000001510">
    <property type="component" value="Chromosome"/>
</dbReference>
<dbReference type="GO" id="GO:0005829">
    <property type="term" value="C:cytosol"/>
    <property type="evidence" value="ECO:0007669"/>
    <property type="project" value="TreeGrafter"/>
</dbReference>
<dbReference type="GO" id="GO:0005524">
    <property type="term" value="F:ATP binding"/>
    <property type="evidence" value="ECO:0007669"/>
    <property type="project" value="UniProtKB-UniRule"/>
</dbReference>
<dbReference type="GO" id="GO:0140664">
    <property type="term" value="F:ATP-dependent DNA damage sensor activity"/>
    <property type="evidence" value="ECO:0007669"/>
    <property type="project" value="InterPro"/>
</dbReference>
<dbReference type="GO" id="GO:0003684">
    <property type="term" value="F:damaged DNA binding"/>
    <property type="evidence" value="ECO:0007669"/>
    <property type="project" value="UniProtKB-UniRule"/>
</dbReference>
<dbReference type="GO" id="GO:0030983">
    <property type="term" value="F:mismatched DNA binding"/>
    <property type="evidence" value="ECO:0007669"/>
    <property type="project" value="InterPro"/>
</dbReference>
<dbReference type="GO" id="GO:0006298">
    <property type="term" value="P:mismatch repair"/>
    <property type="evidence" value="ECO:0007669"/>
    <property type="project" value="UniProtKB-UniRule"/>
</dbReference>
<dbReference type="CDD" id="cd03284">
    <property type="entry name" value="ABC_MutS1"/>
    <property type="match status" value="1"/>
</dbReference>
<dbReference type="FunFam" id="1.10.1420.10:FF:000001">
    <property type="entry name" value="DNA mismatch repair protein MutS"/>
    <property type="match status" value="1"/>
</dbReference>
<dbReference type="FunFam" id="3.40.50.300:FF:000870">
    <property type="entry name" value="MutS protein homolog 4"/>
    <property type="match status" value="1"/>
</dbReference>
<dbReference type="Gene3D" id="1.10.1420.10">
    <property type="match status" value="2"/>
</dbReference>
<dbReference type="Gene3D" id="3.40.1170.10">
    <property type="entry name" value="DNA repair protein MutS, domain I"/>
    <property type="match status" value="1"/>
</dbReference>
<dbReference type="Gene3D" id="3.30.420.110">
    <property type="entry name" value="MutS, connector domain"/>
    <property type="match status" value="1"/>
</dbReference>
<dbReference type="Gene3D" id="3.40.50.300">
    <property type="entry name" value="P-loop containing nucleotide triphosphate hydrolases"/>
    <property type="match status" value="1"/>
</dbReference>
<dbReference type="HAMAP" id="MF_00096">
    <property type="entry name" value="MutS"/>
    <property type="match status" value="1"/>
</dbReference>
<dbReference type="InterPro" id="IPR005748">
    <property type="entry name" value="DNA_mismatch_repair_MutS"/>
</dbReference>
<dbReference type="InterPro" id="IPR007695">
    <property type="entry name" value="DNA_mismatch_repair_MutS-lik_N"/>
</dbReference>
<dbReference type="InterPro" id="IPR017261">
    <property type="entry name" value="DNA_mismatch_repair_MutS/MSH"/>
</dbReference>
<dbReference type="InterPro" id="IPR000432">
    <property type="entry name" value="DNA_mismatch_repair_MutS_C"/>
</dbReference>
<dbReference type="InterPro" id="IPR007861">
    <property type="entry name" value="DNA_mismatch_repair_MutS_clamp"/>
</dbReference>
<dbReference type="InterPro" id="IPR007696">
    <property type="entry name" value="DNA_mismatch_repair_MutS_core"/>
</dbReference>
<dbReference type="InterPro" id="IPR016151">
    <property type="entry name" value="DNA_mismatch_repair_MutS_N"/>
</dbReference>
<dbReference type="InterPro" id="IPR036187">
    <property type="entry name" value="DNA_mismatch_repair_MutS_sf"/>
</dbReference>
<dbReference type="InterPro" id="IPR007860">
    <property type="entry name" value="DNA_mmatch_repair_MutS_con_dom"/>
</dbReference>
<dbReference type="InterPro" id="IPR045076">
    <property type="entry name" value="MutS"/>
</dbReference>
<dbReference type="InterPro" id="IPR036678">
    <property type="entry name" value="MutS_con_dom_sf"/>
</dbReference>
<dbReference type="InterPro" id="IPR027417">
    <property type="entry name" value="P-loop_NTPase"/>
</dbReference>
<dbReference type="NCBIfam" id="TIGR01070">
    <property type="entry name" value="mutS1"/>
    <property type="match status" value="1"/>
</dbReference>
<dbReference type="NCBIfam" id="NF003810">
    <property type="entry name" value="PRK05399.1"/>
    <property type="match status" value="1"/>
</dbReference>
<dbReference type="PANTHER" id="PTHR11361:SF34">
    <property type="entry name" value="DNA MISMATCH REPAIR PROTEIN MSH1, MITOCHONDRIAL"/>
    <property type="match status" value="1"/>
</dbReference>
<dbReference type="PANTHER" id="PTHR11361">
    <property type="entry name" value="DNA MISMATCH REPAIR PROTEIN MUTS FAMILY MEMBER"/>
    <property type="match status" value="1"/>
</dbReference>
<dbReference type="Pfam" id="PF01624">
    <property type="entry name" value="MutS_I"/>
    <property type="match status" value="1"/>
</dbReference>
<dbReference type="Pfam" id="PF05188">
    <property type="entry name" value="MutS_II"/>
    <property type="match status" value="1"/>
</dbReference>
<dbReference type="Pfam" id="PF05192">
    <property type="entry name" value="MutS_III"/>
    <property type="match status" value="1"/>
</dbReference>
<dbReference type="Pfam" id="PF05190">
    <property type="entry name" value="MutS_IV"/>
    <property type="match status" value="1"/>
</dbReference>
<dbReference type="Pfam" id="PF00488">
    <property type="entry name" value="MutS_V"/>
    <property type="match status" value="1"/>
</dbReference>
<dbReference type="PIRSF" id="PIRSF037677">
    <property type="entry name" value="DNA_mis_repair_Msh6"/>
    <property type="match status" value="1"/>
</dbReference>
<dbReference type="SMART" id="SM00534">
    <property type="entry name" value="MUTSac"/>
    <property type="match status" value="1"/>
</dbReference>
<dbReference type="SMART" id="SM00533">
    <property type="entry name" value="MUTSd"/>
    <property type="match status" value="1"/>
</dbReference>
<dbReference type="SUPFAM" id="SSF55271">
    <property type="entry name" value="DNA repair protein MutS, domain I"/>
    <property type="match status" value="1"/>
</dbReference>
<dbReference type="SUPFAM" id="SSF53150">
    <property type="entry name" value="DNA repair protein MutS, domain II"/>
    <property type="match status" value="1"/>
</dbReference>
<dbReference type="SUPFAM" id="SSF48334">
    <property type="entry name" value="DNA repair protein MutS, domain III"/>
    <property type="match status" value="1"/>
</dbReference>
<dbReference type="SUPFAM" id="SSF52540">
    <property type="entry name" value="P-loop containing nucleoside triphosphate hydrolases"/>
    <property type="match status" value="1"/>
</dbReference>
<dbReference type="PROSITE" id="PS00486">
    <property type="entry name" value="DNA_MISMATCH_REPAIR_2"/>
    <property type="match status" value="1"/>
</dbReference>
<gene>
    <name evidence="1" type="primary">mutS</name>
    <name type="ordered locus">MAE_21630</name>
</gene>
<accession>B0JFY0</accession>
<protein>
    <recommendedName>
        <fullName evidence="1">DNA mismatch repair protein MutS</fullName>
    </recommendedName>
</protein>
<reference key="1">
    <citation type="journal article" date="2007" name="DNA Res.">
        <title>Complete genomic structure of the bloom-forming toxic cyanobacterium Microcystis aeruginosa NIES-843.</title>
        <authorList>
            <person name="Kaneko T."/>
            <person name="Nakajima N."/>
            <person name="Okamoto S."/>
            <person name="Suzuki I."/>
            <person name="Tanabe Y."/>
            <person name="Tamaoki M."/>
            <person name="Nakamura Y."/>
            <person name="Kasai F."/>
            <person name="Watanabe A."/>
            <person name="Kawashima K."/>
            <person name="Kishida Y."/>
            <person name="Ono A."/>
            <person name="Shimizu Y."/>
            <person name="Takahashi C."/>
            <person name="Minami C."/>
            <person name="Fujishiro T."/>
            <person name="Kohara M."/>
            <person name="Katoh M."/>
            <person name="Nakazaki N."/>
            <person name="Nakayama S."/>
            <person name="Yamada M."/>
            <person name="Tabata S."/>
            <person name="Watanabe M.M."/>
        </authorList>
    </citation>
    <scope>NUCLEOTIDE SEQUENCE [LARGE SCALE GENOMIC DNA]</scope>
    <source>
        <strain>NIES-843 / IAM M-247</strain>
    </source>
</reference>
<feature type="chain" id="PRO_0000335182" description="DNA mismatch repair protein MutS">
    <location>
        <begin position="1"/>
        <end position="882"/>
    </location>
</feature>
<feature type="region of interest" description="Disordered" evidence="2">
    <location>
        <begin position="1"/>
        <end position="22"/>
    </location>
</feature>
<feature type="binding site" evidence="1">
    <location>
        <begin position="662"/>
        <end position="669"/>
    </location>
    <ligand>
        <name>ATP</name>
        <dbReference type="ChEBI" id="CHEBI:30616"/>
    </ligand>
</feature>
<proteinExistence type="inferred from homology"/>
<comment type="function">
    <text evidence="1">This protein is involved in the repair of mismatches in DNA. It is possible that it carries out the mismatch recognition step. This protein has a weak ATPase activity.</text>
</comment>
<comment type="similarity">
    <text evidence="1">Belongs to the DNA mismatch repair MutS family.</text>
</comment>
<keyword id="KW-0067">ATP-binding</keyword>
<keyword id="KW-0227">DNA damage</keyword>
<keyword id="KW-0234">DNA repair</keyword>
<keyword id="KW-0238">DNA-binding</keyword>
<keyword id="KW-0547">Nucleotide-binding</keyword>
<sequence length="882" mass="98178">MTLPSDFPLEPPATNKDPHRDYRGLDRSKLTPMYQHYVEVKETYPNALLLYRVGDFFECFFQDAVIISRELELVLTSKEGGKGIGRVAMTGVPHHALERYSRLLVEKGYAVAICDQVEDSTEAAAEKRLVERAITKLLTPGTLTDEGMLNAKKNNFLAAVVITGENWGLAYSDISTGEFYTTQASDLTALSLELSRLQPSEILFPINAPDLNRILRPGEKSDHLPPCLPDSFCYSLRPQTIFTLTEAKNRLLITYKMRSLEGMGCEHLPLAIRAAGGLLEYIEDTQKANQVPLQPLKTYSISEFLILDGQTRRNLEITQTVRDGSFYGSLLWAIDRTCTAMGSRALRRWLLQPLLDSRGIRARQDTIQELKDNPALRQDIRQKLREIYDIERLSGRVGAGTANARDLLSLAASLVKLADLAALVASGNSPYLKALQQIPADLEKLGQQVIAHLVESPPLHLKEGGVIREGIDAQLDALRRDYQEVIDWFKNLETTEKERTGISNLKVSYNKTFGYYISLPRSKADFAPKDYVRKQTLVNEERYITTELKEKENIILTAVDELNKLEYEIFSDLRRQVAEFSPEIREVATKVAALDVLAALAEIAVYQGYCRPEIADGRLIDIKDGRHPVVEQSLGAGFFVPNSINLGNQEGLEYPDLIILTGPNASGKSCYLRQVGLIQLLAQTGSFVPAKSAKISICDRIFTRVGAVDDLATGQSTFMVEMNETANILNHATDRSLVLLDEIGRGTATFDGLSIAWSVAEYLATVLQSRTIFATHYHELNELASILENVANYQVTVKELPHEIVFLHQVRPGGADKSYGIEAGRLAGLPTSVIDRAMQVMGQIEKHSKIAIGLRQGIKKIKPVKSDNSPSLQQLDIFDDSK</sequence>
<organism>
    <name type="scientific">Microcystis aeruginosa (strain NIES-843 / IAM M-2473)</name>
    <dbReference type="NCBI Taxonomy" id="449447"/>
    <lineage>
        <taxon>Bacteria</taxon>
        <taxon>Bacillati</taxon>
        <taxon>Cyanobacteriota</taxon>
        <taxon>Cyanophyceae</taxon>
        <taxon>Oscillatoriophycideae</taxon>
        <taxon>Chroococcales</taxon>
        <taxon>Microcystaceae</taxon>
        <taxon>Microcystis</taxon>
    </lineage>
</organism>
<evidence type="ECO:0000255" key="1">
    <source>
        <dbReference type="HAMAP-Rule" id="MF_00096"/>
    </source>
</evidence>
<evidence type="ECO:0000256" key="2">
    <source>
        <dbReference type="SAM" id="MobiDB-lite"/>
    </source>
</evidence>
<name>MUTS_MICAN</name>